<reference key="1">
    <citation type="journal article" date="2004" name="Nucleic Acids Res.">
        <title>Genome sequence of Symbiobacterium thermophilum, an uncultivable bacterium that depends on microbial commensalism.</title>
        <authorList>
            <person name="Ueda K."/>
            <person name="Yamashita A."/>
            <person name="Ishikawa J."/>
            <person name="Shimada M."/>
            <person name="Watsuji T."/>
            <person name="Morimura K."/>
            <person name="Ikeda H."/>
            <person name="Hattori M."/>
            <person name="Beppu T."/>
        </authorList>
    </citation>
    <scope>NUCLEOTIDE SEQUENCE [LARGE SCALE GENOMIC DNA]</scope>
    <source>
        <strain>DSM 24528 / JCM 14929 / IAM 14863 / T</strain>
    </source>
</reference>
<proteinExistence type="inferred from homology"/>
<comment type="function">
    <text evidence="1">This is one of the proteins that binds to the 5S RNA in the ribosome where it forms part of the central protuberance.</text>
</comment>
<comment type="subunit">
    <text evidence="1">Part of the 50S ribosomal subunit; part of the 5S rRNA/L5/L18/L25 subcomplex. Contacts the 5S rRNA. Binds to the 5S rRNA independently of L5 and L18.</text>
</comment>
<comment type="similarity">
    <text evidence="1">Belongs to the bacterial ribosomal protein bL25 family. CTC subfamily.</text>
</comment>
<evidence type="ECO:0000255" key="1">
    <source>
        <dbReference type="HAMAP-Rule" id="MF_01334"/>
    </source>
</evidence>
<evidence type="ECO:0000305" key="2"/>
<name>RL252_SYMTH</name>
<organism>
    <name type="scientific">Symbiobacterium thermophilum (strain DSM 24528 / JCM 14929 / IAM 14863 / T)</name>
    <dbReference type="NCBI Taxonomy" id="292459"/>
    <lineage>
        <taxon>Bacteria</taxon>
        <taxon>Bacillati</taxon>
        <taxon>Bacillota</taxon>
        <taxon>Clostridia</taxon>
        <taxon>Eubacteriales</taxon>
        <taxon>Symbiobacteriaceae</taxon>
        <taxon>Symbiobacterium</taxon>
    </lineage>
</organism>
<feature type="chain" id="PRO_0000181605" description="Large ribosomal subunit protein bL25B">
    <location>
        <begin position="1"/>
        <end position="194"/>
    </location>
</feature>
<keyword id="KW-1185">Reference proteome</keyword>
<keyword id="KW-0687">Ribonucleoprotein</keyword>
<keyword id="KW-0689">Ribosomal protein</keyword>
<keyword id="KW-0694">RNA-binding</keyword>
<keyword id="KW-0699">rRNA-binding</keyword>
<sequence length="194" mass="20874">MQLEATPRGTGSRASRRLRQAGFVPGIIYGPGVEPLAVSVRSTQLERLVERQGRGHLIHVQVEGEANPRQVVIKQLQRDILTQQVTHVDFLQVDMNRTITLTVPIVVVGEEQARRRGLLITHELDEVEVECRPTEIPEAVTLDVSGLTEPGPVTAASLSAPPGVRVLEDPDTVVVSCTVIGGGEEEEASTGPAA</sequence>
<accession>Q67M16</accession>
<protein>
    <recommendedName>
        <fullName evidence="1">Large ribosomal subunit protein bL25B</fullName>
    </recommendedName>
    <alternativeName>
        <fullName evidence="2">50S ribosomal protein L25 2</fullName>
    </alternativeName>
    <alternativeName>
        <fullName evidence="1">General stress protein CTC 2</fullName>
    </alternativeName>
</protein>
<gene>
    <name evidence="1" type="primary">rplY2</name>
    <name evidence="1" type="synonym">ctc2</name>
    <name type="ordered locus">STH2294</name>
</gene>
<dbReference type="EMBL" id="AP006840">
    <property type="protein sequence ID" value="BAD41279.1"/>
    <property type="molecule type" value="Genomic_DNA"/>
</dbReference>
<dbReference type="SMR" id="Q67M16"/>
<dbReference type="STRING" id="292459.STH2294"/>
<dbReference type="KEGG" id="sth:STH2294"/>
<dbReference type="eggNOG" id="COG1825">
    <property type="taxonomic scope" value="Bacteria"/>
</dbReference>
<dbReference type="HOGENOM" id="CLU_075939_2_0_9"/>
<dbReference type="OrthoDB" id="9790002at2"/>
<dbReference type="Proteomes" id="UP000000417">
    <property type="component" value="Chromosome"/>
</dbReference>
<dbReference type="GO" id="GO:0022625">
    <property type="term" value="C:cytosolic large ribosomal subunit"/>
    <property type="evidence" value="ECO:0007669"/>
    <property type="project" value="TreeGrafter"/>
</dbReference>
<dbReference type="GO" id="GO:0008097">
    <property type="term" value="F:5S rRNA binding"/>
    <property type="evidence" value="ECO:0007669"/>
    <property type="project" value="InterPro"/>
</dbReference>
<dbReference type="GO" id="GO:0003735">
    <property type="term" value="F:structural constituent of ribosome"/>
    <property type="evidence" value="ECO:0007669"/>
    <property type="project" value="InterPro"/>
</dbReference>
<dbReference type="GO" id="GO:0006412">
    <property type="term" value="P:translation"/>
    <property type="evidence" value="ECO:0007669"/>
    <property type="project" value="UniProtKB-UniRule"/>
</dbReference>
<dbReference type="CDD" id="cd00495">
    <property type="entry name" value="Ribosomal_L25_TL5_CTC"/>
    <property type="match status" value="1"/>
</dbReference>
<dbReference type="Gene3D" id="2.170.120.20">
    <property type="entry name" value="Ribosomal protein L25, beta domain"/>
    <property type="match status" value="1"/>
</dbReference>
<dbReference type="Gene3D" id="2.40.240.10">
    <property type="entry name" value="Ribosomal Protein L25, Chain P"/>
    <property type="match status" value="1"/>
</dbReference>
<dbReference type="HAMAP" id="MF_01334">
    <property type="entry name" value="Ribosomal_bL25_CTC"/>
    <property type="match status" value="1"/>
</dbReference>
<dbReference type="InterPro" id="IPR020056">
    <property type="entry name" value="Rbsml_bL25/Gln-tRNA_synth_N"/>
</dbReference>
<dbReference type="InterPro" id="IPR011035">
    <property type="entry name" value="Ribosomal_bL25/Gln-tRNA_synth"/>
</dbReference>
<dbReference type="InterPro" id="IPR020057">
    <property type="entry name" value="Ribosomal_bL25_b-dom"/>
</dbReference>
<dbReference type="InterPro" id="IPR037121">
    <property type="entry name" value="Ribosomal_bL25_C"/>
</dbReference>
<dbReference type="InterPro" id="IPR001021">
    <property type="entry name" value="Ribosomal_bL25_long"/>
</dbReference>
<dbReference type="InterPro" id="IPR029751">
    <property type="entry name" value="Ribosomal_L25_dom"/>
</dbReference>
<dbReference type="InterPro" id="IPR020930">
    <property type="entry name" value="Ribosomal_uL5_bac-type"/>
</dbReference>
<dbReference type="NCBIfam" id="TIGR00731">
    <property type="entry name" value="bL25_bact_ctc"/>
    <property type="match status" value="1"/>
</dbReference>
<dbReference type="PANTHER" id="PTHR33284">
    <property type="entry name" value="RIBOSOMAL PROTEIN L25/GLN-TRNA SYNTHETASE, ANTI-CODON-BINDING DOMAIN-CONTAINING PROTEIN"/>
    <property type="match status" value="1"/>
</dbReference>
<dbReference type="PANTHER" id="PTHR33284:SF1">
    <property type="entry name" value="RIBOSOMAL PROTEIN L25_GLN-TRNA SYNTHETASE, ANTI-CODON-BINDING DOMAIN-CONTAINING PROTEIN"/>
    <property type="match status" value="1"/>
</dbReference>
<dbReference type="Pfam" id="PF01386">
    <property type="entry name" value="Ribosomal_L25p"/>
    <property type="match status" value="1"/>
</dbReference>
<dbReference type="Pfam" id="PF14693">
    <property type="entry name" value="Ribosomal_TL5_C"/>
    <property type="match status" value="1"/>
</dbReference>
<dbReference type="SUPFAM" id="SSF50715">
    <property type="entry name" value="Ribosomal protein L25-like"/>
    <property type="match status" value="1"/>
</dbReference>